<dbReference type="SMR" id="P62756"/>
<dbReference type="STRING" id="9925.ENSCHIP00000033442"/>
<dbReference type="Proteomes" id="UP000291000">
    <property type="component" value="Unassembled WGS sequence"/>
</dbReference>
<dbReference type="Proteomes" id="UP000694566">
    <property type="component" value="Unplaced"/>
</dbReference>
<dbReference type="GO" id="GO:0005576">
    <property type="term" value="C:extracellular region"/>
    <property type="evidence" value="ECO:0007669"/>
    <property type="project" value="UniProtKB-SubCell"/>
</dbReference>
<dbReference type="GO" id="GO:0004867">
    <property type="term" value="F:serine-type endopeptidase inhibitor activity"/>
    <property type="evidence" value="ECO:0007669"/>
    <property type="project" value="UniProtKB-KW"/>
</dbReference>
<dbReference type="CDD" id="cd22597">
    <property type="entry name" value="Kunitz_bikunin_2-like"/>
    <property type="match status" value="1"/>
</dbReference>
<dbReference type="FunFam" id="4.10.410.10:FF:000005">
    <property type="entry name" value="Pancreatic trypsin inhibitor"/>
    <property type="match status" value="1"/>
</dbReference>
<dbReference type="Gene3D" id="4.10.410.10">
    <property type="entry name" value="Pancreatic trypsin inhibitor Kunitz domain"/>
    <property type="match status" value="2"/>
</dbReference>
<dbReference type="InterPro" id="IPR029856">
    <property type="entry name" value="AMBP"/>
</dbReference>
<dbReference type="InterPro" id="IPR002223">
    <property type="entry name" value="Kunitz_BPTI"/>
</dbReference>
<dbReference type="InterPro" id="IPR036880">
    <property type="entry name" value="Kunitz_BPTI_sf"/>
</dbReference>
<dbReference type="InterPro" id="IPR020901">
    <property type="entry name" value="Prtase_inh_Kunz-CS"/>
</dbReference>
<dbReference type="PANTHER" id="PTHR46676">
    <property type="entry name" value="PROTEIN AMBP"/>
    <property type="match status" value="1"/>
</dbReference>
<dbReference type="PANTHER" id="PTHR46676:SF1">
    <property type="entry name" value="PROTEIN AMBP"/>
    <property type="match status" value="1"/>
</dbReference>
<dbReference type="Pfam" id="PF00014">
    <property type="entry name" value="Kunitz_BPTI"/>
    <property type="match status" value="2"/>
</dbReference>
<dbReference type="PRINTS" id="PR00759">
    <property type="entry name" value="BASICPTASE"/>
</dbReference>
<dbReference type="SMART" id="SM00131">
    <property type="entry name" value="KU"/>
    <property type="match status" value="2"/>
</dbReference>
<dbReference type="SUPFAM" id="SSF57362">
    <property type="entry name" value="BPTI-like"/>
    <property type="match status" value="2"/>
</dbReference>
<dbReference type="PROSITE" id="PS00280">
    <property type="entry name" value="BPTI_KUNITZ_1"/>
    <property type="match status" value="2"/>
</dbReference>
<dbReference type="PROSITE" id="PS50279">
    <property type="entry name" value="BPTI_KUNITZ_2"/>
    <property type="match status" value="2"/>
</dbReference>
<evidence type="ECO:0000255" key="1">
    <source>
        <dbReference type="PROSITE-ProRule" id="PRU00031"/>
    </source>
</evidence>
<accession>P62756</accession>
<accession>P13371</accession>
<reference key="1">
    <citation type="journal article" date="1989" name="Biochim. Biophys. Acta">
        <title>Primary structure of a proteinase inhibitor released from goat serum inter-alpha-trypsin inhibitor.</title>
        <authorList>
            <person name="Rasp G."/>
            <person name="Hochstrasser K."/>
            <person name="Gerl C."/>
            <person name="Wachter E."/>
        </authorList>
    </citation>
    <scope>PROTEIN SEQUENCE</scope>
</reference>
<keyword id="KW-0903">Direct protein sequencing</keyword>
<keyword id="KW-1015">Disulfide bond</keyword>
<keyword id="KW-0325">Glycoprotein</keyword>
<keyword id="KW-0646">Protease inhibitor</keyword>
<keyword id="KW-1185">Reference proteome</keyword>
<keyword id="KW-0677">Repeat</keyword>
<keyword id="KW-0964">Secreted</keyword>
<keyword id="KW-0722">Serine protease inhibitor</keyword>
<organism>
    <name type="scientific">Capra hircus</name>
    <name type="common">Goat</name>
    <dbReference type="NCBI Taxonomy" id="9925"/>
    <lineage>
        <taxon>Eukaryota</taxon>
        <taxon>Metazoa</taxon>
        <taxon>Chordata</taxon>
        <taxon>Craniata</taxon>
        <taxon>Vertebrata</taxon>
        <taxon>Euteleostomi</taxon>
        <taxon>Mammalia</taxon>
        <taxon>Eutheria</taxon>
        <taxon>Laurasiatheria</taxon>
        <taxon>Artiodactyla</taxon>
        <taxon>Ruminantia</taxon>
        <taxon>Pecora</taxon>
        <taxon>Bovidae</taxon>
        <taxon>Caprinae</taxon>
        <taxon>Capra</taxon>
    </lineage>
</organism>
<proteinExistence type="evidence at protein level"/>
<protein>
    <recommendedName>
        <fullName>Inter-alpha-trypsin inhibitor</fullName>
        <shortName>ITI</shortName>
    </recommendedName>
    <alternativeName>
        <fullName>GIK-14</fullName>
    </alternativeName>
    <alternativeName>
        <fullName>Inhibitory fragment of ITI</fullName>
    </alternativeName>
</protein>
<feature type="chain" id="PRO_0000155404" description="Inter-alpha-trypsin inhibitor">
    <location>
        <begin position="1" status="less than"/>
        <end position="123" status="greater than"/>
    </location>
</feature>
<feature type="domain" description="BPTI/Kunitz inhibitor 1" evidence="1">
    <location>
        <begin position="5"/>
        <end position="55"/>
    </location>
</feature>
<feature type="domain" description="BPTI/Kunitz inhibitor 2" evidence="1">
    <location>
        <begin position="61"/>
        <end position="111"/>
    </location>
</feature>
<feature type="site" description="Reactive bond for chymotrypsin and elastase">
    <location>
        <begin position="15"/>
        <end position="16"/>
    </location>
</feature>
<feature type="site" description="Reactive bond for trypsin">
    <location>
        <begin position="71"/>
        <end position="72"/>
    </location>
</feature>
<feature type="glycosylation site" description="N-linked (GlcNAc...) asparagine">
    <location>
        <position position="24"/>
    </location>
</feature>
<feature type="disulfide bond" evidence="1">
    <location>
        <begin position="5"/>
        <end position="55"/>
    </location>
</feature>
<feature type="disulfide bond" evidence="1">
    <location>
        <begin position="14"/>
        <end position="38"/>
    </location>
</feature>
<feature type="disulfide bond" evidence="1">
    <location>
        <begin position="30"/>
        <end position="51"/>
    </location>
</feature>
<feature type="disulfide bond" evidence="1">
    <location>
        <begin position="61"/>
        <end position="111"/>
    </location>
</feature>
<feature type="disulfide bond" evidence="1">
    <location>
        <begin position="70"/>
        <end position="94"/>
    </location>
</feature>
<feature type="disulfide bond" evidence="1">
    <location>
        <begin position="86"/>
        <end position="107"/>
    </location>
</feature>
<feature type="non-terminal residue">
    <location>
        <position position="1"/>
    </location>
</feature>
<feature type="non-terminal residue">
    <location>
        <position position="123"/>
    </location>
</feature>
<comment type="function">
    <text>This inhibitory fragment, released from native ITI after limited proteolysis with trypsin, contains two homologous domains. Whereas the second domain is a strong inhibitor of trypsin, the first domain interacts weakly with PMN-granulocytic elastase and not at all with pancreatic elastase.</text>
</comment>
<comment type="subcellular location">
    <subcellularLocation>
        <location>Secreted</location>
    </subcellularLocation>
</comment>
<comment type="miscellaneous">
    <text>The amino acid at position p2' (17) appears to determine the specificity of the inhibition of domain I. Inhibitors with methionine in this position interact weakly with chymotrypsin and elastase; those with leucine interact strongly.</text>
</comment>
<name>IATR_CAPHI</name>
<sequence>KEDSCQLGYSQGPCLGMFKRYFYNGTSMACETFYYGGCMGNGNNFPSEKECLQTCRTVQACNLPIVRGPCRAGIELWAFDAVKGKCVRFIYGGCNGNGNQFYSQKECKEYCGIPGEADEELLR</sequence>